<protein>
    <recommendedName>
        <fullName>Small venom protein 1</fullName>
        <shortName>svp1</shortName>
    </recommendedName>
</protein>
<name>SVP1_PIMHY</name>
<reference evidence="3 4" key="1">
    <citation type="journal article" date="2004" name="Insect Biochem. Mol. Biol.">
        <title>Towards a comprehensive view of the primary structure of venom proteins from the parasitoid wasp Pimpla hypochondriaca.</title>
        <authorList>
            <person name="Parkinson N.M."/>
            <person name="Conyers C."/>
            <person name="Keen J."/>
            <person name="MacNicoll A."/>
            <person name="Smith I."/>
            <person name="Audsley N."/>
            <person name="Weaver R."/>
        </authorList>
    </citation>
    <scope>NUCLEOTIDE SEQUENCE [MRNA]</scope>
    <scope>PROTEIN SEQUENCE OF 21-26</scope>
    <source>
        <tissue evidence="2">Venom</tissue>
        <tissue evidence="2">Venom gland</tissue>
    </source>
</reference>
<proteinExistence type="evidence at protein level"/>
<dbReference type="EMBL" id="AJ459809">
    <property type="protein sequence ID" value="CAD30853.1"/>
    <property type="molecule type" value="mRNA"/>
</dbReference>
<dbReference type="GO" id="GO:0005576">
    <property type="term" value="C:extracellular region"/>
    <property type="evidence" value="ECO:0007669"/>
    <property type="project" value="UniProtKB-SubCell"/>
</dbReference>
<evidence type="ECO:0000255" key="1"/>
<evidence type="ECO:0000269" key="2">
    <source>
    </source>
</evidence>
<evidence type="ECO:0000305" key="3"/>
<evidence type="ECO:0000312" key="4">
    <source>
        <dbReference type="EMBL" id="CAD30853.1"/>
    </source>
</evidence>
<keyword id="KW-0903">Direct protein sequencing</keyword>
<keyword id="KW-0964">Secreted</keyword>
<keyword id="KW-0732">Signal</keyword>
<organism>
    <name type="scientific">Pimpla hypochondriaca</name>
    <name type="common">Parasitoid wasp</name>
    <dbReference type="NCBI Taxonomy" id="135724"/>
    <lineage>
        <taxon>Eukaryota</taxon>
        <taxon>Metazoa</taxon>
        <taxon>Ecdysozoa</taxon>
        <taxon>Arthropoda</taxon>
        <taxon>Hexapoda</taxon>
        <taxon>Insecta</taxon>
        <taxon>Pterygota</taxon>
        <taxon>Neoptera</taxon>
        <taxon>Endopterygota</taxon>
        <taxon>Hymenoptera</taxon>
        <taxon>Apocrita</taxon>
        <taxon>Ichneumonoidea</taxon>
        <taxon>Ichneumonidae</taxon>
        <taxon>Pimplinae</taxon>
        <taxon>Pimplini</taxon>
        <taxon>Pimpla</taxon>
    </lineage>
</organism>
<feature type="signal peptide" evidence="1 2">
    <location>
        <begin position="1"/>
        <end position="20"/>
    </location>
</feature>
<feature type="chain" id="PRO_0000022445" description="Small venom protein 1" evidence="1 2">
    <location>
        <begin position="21"/>
        <end position="61"/>
    </location>
</feature>
<sequence length="61" mass="6719">MRCVAIFLVVICAFVLQALAEVQCPASGASDQDNLDFCMEYPELIEKCELKSCEGFIKVVS</sequence>
<accession>Q8MMH5</accession>
<comment type="subcellular location">
    <subcellularLocation>
        <location evidence="2">Secreted</location>
    </subcellularLocation>
</comment>
<comment type="tissue specificity">
    <text evidence="2">Expressed by the venom gland.</text>
</comment>